<feature type="chain" id="PRO_0000212462" description="Putative esterase slr0264">
    <location>
        <begin position="1"/>
        <end position="369"/>
    </location>
</feature>
<feature type="active site" description="Charge relay system" evidence="1">
    <location>
        <position position="162"/>
    </location>
</feature>
<feature type="active site" description="Charge relay system" evidence="1">
    <location>
        <position position="303"/>
    </location>
</feature>
<feature type="active site" description="Charge relay system" evidence="1">
    <location>
        <position position="334"/>
    </location>
</feature>
<dbReference type="EC" id="3.1.1.-"/>
<dbReference type="EMBL" id="BA000022">
    <property type="protein sequence ID" value="BAA17942.1"/>
    <property type="molecule type" value="Genomic_DNA"/>
</dbReference>
<dbReference type="PIR" id="S75080">
    <property type="entry name" value="S75080"/>
</dbReference>
<dbReference type="STRING" id="1148.gene:10498811"/>
<dbReference type="ESTHER" id="syny3-y264">
    <property type="family name" value="abh_upf0017"/>
</dbReference>
<dbReference type="PaxDb" id="1148-1653025"/>
<dbReference type="EnsemblBacteria" id="BAA17942">
    <property type="protein sequence ID" value="BAA17942"/>
    <property type="gene ID" value="BAA17942"/>
</dbReference>
<dbReference type="KEGG" id="syn:slr0264"/>
<dbReference type="eggNOG" id="COG0429">
    <property type="taxonomic scope" value="Bacteria"/>
</dbReference>
<dbReference type="InParanoid" id="P73879"/>
<dbReference type="PhylomeDB" id="P73879"/>
<dbReference type="Proteomes" id="UP000001425">
    <property type="component" value="Chromosome"/>
</dbReference>
<dbReference type="GO" id="GO:0047372">
    <property type="term" value="F:monoacylglycerol lipase activity"/>
    <property type="evidence" value="ECO:0000318"/>
    <property type="project" value="GO_Central"/>
</dbReference>
<dbReference type="GO" id="GO:0034338">
    <property type="term" value="F:short-chain carboxylesterase activity"/>
    <property type="evidence" value="ECO:0000318"/>
    <property type="project" value="GO_Central"/>
</dbReference>
<dbReference type="GO" id="GO:0006629">
    <property type="term" value="P:lipid metabolic process"/>
    <property type="evidence" value="ECO:0000318"/>
    <property type="project" value="GO_Central"/>
</dbReference>
<dbReference type="FunFam" id="3.40.50.1820:FF:000283">
    <property type="entry name" value="Alpha/beta fold hydrolase"/>
    <property type="match status" value="1"/>
</dbReference>
<dbReference type="Gene3D" id="3.40.50.1820">
    <property type="entry name" value="alpha/beta hydrolase"/>
    <property type="match status" value="1"/>
</dbReference>
<dbReference type="InterPro" id="IPR000073">
    <property type="entry name" value="AB_hydrolase_1"/>
</dbReference>
<dbReference type="InterPro" id="IPR000952">
    <property type="entry name" value="AB_hydrolase_4_CS"/>
</dbReference>
<dbReference type="InterPro" id="IPR050960">
    <property type="entry name" value="AB_hydrolase_4_sf"/>
</dbReference>
<dbReference type="InterPro" id="IPR029058">
    <property type="entry name" value="AB_hydrolase_fold"/>
</dbReference>
<dbReference type="InterPro" id="IPR012020">
    <property type="entry name" value="ABHD4"/>
</dbReference>
<dbReference type="PANTHER" id="PTHR10794">
    <property type="entry name" value="ABHYDROLASE DOMAIN-CONTAINING PROTEIN"/>
    <property type="match status" value="1"/>
</dbReference>
<dbReference type="PANTHER" id="PTHR10794:SF94">
    <property type="entry name" value="ESTERASE YHET-RELATED"/>
    <property type="match status" value="1"/>
</dbReference>
<dbReference type="Pfam" id="PF12697">
    <property type="entry name" value="Abhydrolase_6"/>
    <property type="match status" value="1"/>
</dbReference>
<dbReference type="PIRSF" id="PIRSF005211">
    <property type="entry name" value="Ab_hydro_YheT"/>
    <property type="match status" value="1"/>
</dbReference>
<dbReference type="SUPFAM" id="SSF53474">
    <property type="entry name" value="alpha/beta-Hydrolases"/>
    <property type="match status" value="1"/>
</dbReference>
<dbReference type="PROSITE" id="PS01133">
    <property type="entry name" value="UPF0017"/>
    <property type="match status" value="1"/>
</dbReference>
<reference key="1">
    <citation type="journal article" date="1996" name="DNA Res.">
        <title>Sequence analysis of the genome of the unicellular cyanobacterium Synechocystis sp. strain PCC6803. II. Sequence determination of the entire genome and assignment of potential protein-coding regions.</title>
        <authorList>
            <person name="Kaneko T."/>
            <person name="Sato S."/>
            <person name="Kotani H."/>
            <person name="Tanaka A."/>
            <person name="Asamizu E."/>
            <person name="Nakamura Y."/>
            <person name="Miyajima N."/>
            <person name="Hirosawa M."/>
            <person name="Sugiura M."/>
            <person name="Sasamoto S."/>
            <person name="Kimura T."/>
            <person name="Hosouchi T."/>
            <person name="Matsuno A."/>
            <person name="Muraki A."/>
            <person name="Nakazaki N."/>
            <person name="Naruo K."/>
            <person name="Okumura S."/>
            <person name="Shimpo S."/>
            <person name="Takeuchi C."/>
            <person name="Wada T."/>
            <person name="Watanabe A."/>
            <person name="Yamada M."/>
            <person name="Yasuda M."/>
            <person name="Tabata S."/>
        </authorList>
    </citation>
    <scope>NUCLEOTIDE SEQUENCE [LARGE SCALE GENOMIC DNA]</scope>
    <source>
        <strain>ATCC 27184 / PCC 6803 / Kazusa</strain>
    </source>
</reference>
<gene>
    <name type="ordered locus">slr0264</name>
</gene>
<comment type="similarity">
    <text evidence="2">Belongs to the AB hydrolase superfamily. AB hydrolase 4 family.</text>
</comment>
<evidence type="ECO:0000250" key="1"/>
<evidence type="ECO:0000305" key="2"/>
<sequence>MRSPLLAPSEKCQAWPRFTPPWYLSSGLAMTLYTAFVANQRCLNSARTREPEYISQVMTGSQGVPLHVWRSPIPSQAKGTLIATYGITGSLEDQGFLRQWGRWAYERHYDVILFDWRAHGKTAELSPTLTSDGLYEGEDFVYLAAQAKALGYPGPFWFGGYSLGGQLSLWGVYKGQTLADWGNNDAMLTSFSPTDIGGAMAICPSLDSQRSLNYLTSHPVGRYLEKAIANKLKELAWQLHRHHPGEFDSQAIERANTIWGFDHNLVIDRLGLASVEDYYEVSSALPLLSKIVKPTLLLYAADDPMFHPAIVEELPGLQNQLTGVDLQITPKGGHVGYIANGPCQQASNDPDENWAIHRTLDWLDQKSLA</sequence>
<accession>P73879</accession>
<name>Y264_SYNY3</name>
<proteinExistence type="inferred from homology"/>
<protein>
    <recommendedName>
        <fullName>Putative esterase slr0264</fullName>
        <ecNumber>3.1.1.-</ecNumber>
    </recommendedName>
</protein>
<keyword id="KW-0378">Hydrolase</keyword>
<keyword id="KW-1185">Reference proteome</keyword>
<keyword id="KW-0719">Serine esterase</keyword>
<organism>
    <name type="scientific">Synechocystis sp. (strain ATCC 27184 / PCC 6803 / Kazusa)</name>
    <dbReference type="NCBI Taxonomy" id="1111708"/>
    <lineage>
        <taxon>Bacteria</taxon>
        <taxon>Bacillati</taxon>
        <taxon>Cyanobacteriota</taxon>
        <taxon>Cyanophyceae</taxon>
        <taxon>Synechococcales</taxon>
        <taxon>Merismopediaceae</taxon>
        <taxon>Synechocystis</taxon>
    </lineage>
</organism>